<gene>
    <name evidence="1" type="primary">kup3</name>
    <name type="ordered locus">lpl2302</name>
</gene>
<reference key="1">
    <citation type="journal article" date="2004" name="Nat. Genet.">
        <title>Evidence in the Legionella pneumophila genome for exploitation of host cell functions and high genome plasticity.</title>
        <authorList>
            <person name="Cazalet C."/>
            <person name="Rusniok C."/>
            <person name="Brueggemann H."/>
            <person name="Zidane N."/>
            <person name="Magnier A."/>
            <person name="Ma L."/>
            <person name="Tichit M."/>
            <person name="Jarraud S."/>
            <person name="Bouchier C."/>
            <person name="Vandenesch F."/>
            <person name="Kunst F."/>
            <person name="Etienne J."/>
            <person name="Glaser P."/>
            <person name="Buchrieser C."/>
        </authorList>
    </citation>
    <scope>NUCLEOTIDE SEQUENCE [LARGE SCALE GENOMIC DNA]</scope>
    <source>
        <strain>Lens</strain>
    </source>
</reference>
<name>KUP3_LEGPL</name>
<organism>
    <name type="scientific">Legionella pneumophila (strain Lens)</name>
    <dbReference type="NCBI Taxonomy" id="297245"/>
    <lineage>
        <taxon>Bacteria</taxon>
        <taxon>Pseudomonadati</taxon>
        <taxon>Pseudomonadota</taxon>
        <taxon>Gammaproteobacteria</taxon>
        <taxon>Legionellales</taxon>
        <taxon>Legionellaceae</taxon>
        <taxon>Legionella</taxon>
    </lineage>
</organism>
<accession>Q5WU69</accession>
<protein>
    <recommendedName>
        <fullName evidence="1">Probable potassium transport system protein Kup 3</fullName>
    </recommendedName>
</protein>
<comment type="function">
    <text evidence="1">Transport of potassium into the cell. Likely operates as a K(+):H(+) symporter.</text>
</comment>
<comment type="catalytic activity">
    <reaction evidence="1">
        <text>K(+)(in) + H(+)(in) = K(+)(out) + H(+)(out)</text>
        <dbReference type="Rhea" id="RHEA:28490"/>
        <dbReference type="ChEBI" id="CHEBI:15378"/>
        <dbReference type="ChEBI" id="CHEBI:29103"/>
    </reaction>
    <physiologicalReaction direction="right-to-left" evidence="1">
        <dbReference type="Rhea" id="RHEA:28492"/>
    </physiologicalReaction>
</comment>
<comment type="subcellular location">
    <subcellularLocation>
        <location evidence="1">Cell inner membrane</location>
        <topology evidence="1">Multi-pass membrane protein</topology>
    </subcellularLocation>
</comment>
<comment type="similarity">
    <text evidence="1">Belongs to the HAK/KUP transporter (TC 2.A.72) family.</text>
</comment>
<proteinExistence type="inferred from homology"/>
<sequence length="629" mass="68994">MPSTRNIEKLNDSNPTLRTLSLSALGIVYGDIGTSPLYTFKTVILLAGGGTPDVNTIMGSVSLIIWTLIIIASVKYISFALRIDNDGEGGILALMSLLSLKLKHRPFIIAVGLMGAALIYGDGTITPAISVLSAIEGLEILSPSLKYYVLPIAITILITLFAIQSKGTATIGKAFGPVMAFWFLTIGILGARGVIQHPFVLAAINPVYGLNFLFSNGATGFFILCGVFLCVTGAEALYADLGHFGTAPIRCAWFGLAFPSLIFNYLGQAALVLEGASTEHNIFYMLCPSDFLLPLIILSTVATIIASQAIITGAFSMTRQAMQLGWLPRLRVTQTSSEGYGQIYIGVVNWFLMLATLGLTIGFGSSEKLAAAYGIAVSATMLCTTVLLFIALHKLWKWNIITSGLVAGLFMIVDASFFAANLTKFINGGYIPITLAIIIYSMMYIWHKGYKTIAIKQKEKNITVDSFLDSIQKEGVVRVPKTAVFLTSKEQDIPPILVWHVKKNRVLQDKVIILNINNLSIPWCKPADQLQIVETGAGIWHAVANYGFMEQPHIPKLLKKLEAQGYDINIKDITYYIGHETIFVRNVRHTMSKYIKILFVFMHRNALPMSNYFHLPPESVFEIGRQIEI</sequence>
<dbReference type="EMBL" id="CR628337">
    <property type="protein sequence ID" value="CAH16542.1"/>
    <property type="molecule type" value="Genomic_DNA"/>
</dbReference>
<dbReference type="RefSeq" id="WP_011216268.1">
    <property type="nucleotide sequence ID" value="NC_006369.1"/>
</dbReference>
<dbReference type="KEGG" id="lpf:lpl2302"/>
<dbReference type="LegioList" id="lpl2302"/>
<dbReference type="HOGENOM" id="CLU_008142_4_2_6"/>
<dbReference type="Proteomes" id="UP000002517">
    <property type="component" value="Chromosome"/>
</dbReference>
<dbReference type="GO" id="GO:0005886">
    <property type="term" value="C:plasma membrane"/>
    <property type="evidence" value="ECO:0007669"/>
    <property type="project" value="UniProtKB-SubCell"/>
</dbReference>
<dbReference type="GO" id="GO:0015079">
    <property type="term" value="F:potassium ion transmembrane transporter activity"/>
    <property type="evidence" value="ECO:0007669"/>
    <property type="project" value="UniProtKB-UniRule"/>
</dbReference>
<dbReference type="GO" id="GO:0015293">
    <property type="term" value="F:symporter activity"/>
    <property type="evidence" value="ECO:0007669"/>
    <property type="project" value="UniProtKB-UniRule"/>
</dbReference>
<dbReference type="HAMAP" id="MF_01522">
    <property type="entry name" value="Kup"/>
    <property type="match status" value="1"/>
</dbReference>
<dbReference type="InterPro" id="IPR003855">
    <property type="entry name" value="K+_transporter"/>
</dbReference>
<dbReference type="InterPro" id="IPR053952">
    <property type="entry name" value="K_trans_C"/>
</dbReference>
<dbReference type="InterPro" id="IPR053951">
    <property type="entry name" value="K_trans_N"/>
</dbReference>
<dbReference type="InterPro" id="IPR023051">
    <property type="entry name" value="Kup"/>
</dbReference>
<dbReference type="PANTHER" id="PTHR30540:SF83">
    <property type="entry name" value="K+ POTASSIUM TRANSPORTER"/>
    <property type="match status" value="1"/>
</dbReference>
<dbReference type="PANTHER" id="PTHR30540">
    <property type="entry name" value="OSMOTIC STRESS POTASSIUM TRANSPORTER"/>
    <property type="match status" value="1"/>
</dbReference>
<dbReference type="Pfam" id="PF02705">
    <property type="entry name" value="K_trans"/>
    <property type="match status" value="1"/>
</dbReference>
<dbReference type="Pfam" id="PF22776">
    <property type="entry name" value="K_trans_C"/>
    <property type="match status" value="1"/>
</dbReference>
<evidence type="ECO:0000255" key="1">
    <source>
        <dbReference type="HAMAP-Rule" id="MF_01522"/>
    </source>
</evidence>
<feature type="chain" id="PRO_0000209037" description="Probable potassium transport system protein Kup 3">
    <location>
        <begin position="1"/>
        <end position="629"/>
    </location>
</feature>
<feature type="transmembrane region" description="Helical" evidence="1">
    <location>
        <begin position="20"/>
        <end position="40"/>
    </location>
</feature>
<feature type="transmembrane region" description="Helical" evidence="1">
    <location>
        <begin position="61"/>
        <end position="81"/>
    </location>
</feature>
<feature type="transmembrane region" description="Helical" evidence="1">
    <location>
        <begin position="106"/>
        <end position="126"/>
    </location>
</feature>
<feature type="transmembrane region" description="Helical" evidence="1">
    <location>
        <begin position="143"/>
        <end position="163"/>
    </location>
</feature>
<feature type="transmembrane region" description="Helical" evidence="1">
    <location>
        <begin position="171"/>
        <end position="191"/>
    </location>
</feature>
<feature type="transmembrane region" description="Helical" evidence="1">
    <location>
        <begin position="212"/>
        <end position="232"/>
    </location>
</feature>
<feature type="transmembrane region" description="Helical" evidence="1">
    <location>
        <begin position="253"/>
        <end position="273"/>
    </location>
</feature>
<feature type="transmembrane region" description="Helical" evidence="1">
    <location>
        <begin position="291"/>
        <end position="311"/>
    </location>
</feature>
<feature type="transmembrane region" description="Helical" evidence="1">
    <location>
        <begin position="343"/>
        <end position="363"/>
    </location>
</feature>
<feature type="transmembrane region" description="Helical" evidence="1">
    <location>
        <begin position="372"/>
        <end position="392"/>
    </location>
</feature>
<feature type="transmembrane region" description="Helical" evidence="1">
    <location>
        <begin position="400"/>
        <end position="420"/>
    </location>
</feature>
<feature type="transmembrane region" description="Helical" evidence="1">
    <location>
        <begin position="425"/>
        <end position="445"/>
    </location>
</feature>
<keyword id="KW-0997">Cell inner membrane</keyword>
<keyword id="KW-1003">Cell membrane</keyword>
<keyword id="KW-0406">Ion transport</keyword>
<keyword id="KW-0472">Membrane</keyword>
<keyword id="KW-0630">Potassium</keyword>
<keyword id="KW-0633">Potassium transport</keyword>
<keyword id="KW-0769">Symport</keyword>
<keyword id="KW-0812">Transmembrane</keyword>
<keyword id="KW-1133">Transmembrane helix</keyword>
<keyword id="KW-0813">Transport</keyword>